<sequence length="385" mass="42732">MQDVEEFRAQVRGWLADNLAGEFAALKGLGGPGREHEAFEERRAWNQRLAAAGLTCLGWPEEHGGRGLSTAHRVAFYEEYARADAPDKVNHFGEELLGPTLIAFGTPQQQRRFLPRIRDVTELWCQGYSEPGAGSDLASVATTAELDGDQWVINGQKVWTSLAHLSQWCFVLARTEKGSQRHAGLSYLLVPLDQPGVQIRPIVQITGTAEFNEVFFDDARTDADLVVGAPGDGWRVAMATLTFERGVSTLGQQIVYARELSNLVELARRTAAADDPLIRERLTRAWTGLRAMRSYALATMEGPAVEQPGQDNVSKLLWANWHRNLGELAMDVIGKPGMTMPDGEFDEWQRLYLFTRADTIYGGSNEIQRNIIAERVLGLPREAKG</sequence>
<feature type="chain" id="PRO_0000452315" description="Acyl-CoA dehydrogenase IpdE1">
    <location>
        <begin position="1"/>
        <end position="385"/>
    </location>
</feature>
<feature type="active site" description="Proton acceptor" evidence="1">
    <location>
        <position position="244"/>
    </location>
</feature>
<feature type="binding site" evidence="1">
    <location>
        <begin position="126"/>
        <end position="129"/>
    </location>
    <ligand>
        <name>FAD</name>
        <dbReference type="ChEBI" id="CHEBI:57692"/>
    </ligand>
</feature>
<feature type="binding site" evidence="1">
    <location>
        <position position="161"/>
    </location>
    <ligand>
        <name>FAD</name>
        <dbReference type="ChEBI" id="CHEBI:57692"/>
    </ligand>
</feature>
<feature type="binding site" evidence="1">
    <location>
        <begin position="364"/>
        <end position="366"/>
    </location>
    <ligand>
        <name>FAD</name>
        <dbReference type="ChEBI" id="CHEBI:57692"/>
    </ligand>
</feature>
<organism>
    <name type="scientific">Mycobacterium tuberculosis (strain ATCC 25618 / H37Rv)</name>
    <dbReference type="NCBI Taxonomy" id="83332"/>
    <lineage>
        <taxon>Bacteria</taxon>
        <taxon>Bacillati</taxon>
        <taxon>Actinomycetota</taxon>
        <taxon>Actinomycetes</taxon>
        <taxon>Mycobacteriales</taxon>
        <taxon>Mycobacteriaceae</taxon>
        <taxon>Mycobacterium</taxon>
        <taxon>Mycobacterium tuberculosis complex</taxon>
    </lineage>
</organism>
<reference key="1">
    <citation type="journal article" date="1998" name="Nature">
        <title>Deciphering the biology of Mycobacterium tuberculosis from the complete genome sequence.</title>
        <authorList>
            <person name="Cole S.T."/>
            <person name="Brosch R."/>
            <person name="Parkhill J."/>
            <person name="Garnier T."/>
            <person name="Churcher C.M."/>
            <person name="Harris D.E."/>
            <person name="Gordon S.V."/>
            <person name="Eiglmeier K."/>
            <person name="Gas S."/>
            <person name="Barry C.E. III"/>
            <person name="Tekaia F."/>
            <person name="Badcock K."/>
            <person name="Basham D."/>
            <person name="Brown D."/>
            <person name="Chillingworth T."/>
            <person name="Connor R."/>
            <person name="Davies R.M."/>
            <person name="Devlin K."/>
            <person name="Feltwell T."/>
            <person name="Gentles S."/>
            <person name="Hamlin N."/>
            <person name="Holroyd S."/>
            <person name="Hornsby T."/>
            <person name="Jagels K."/>
            <person name="Krogh A."/>
            <person name="McLean J."/>
            <person name="Moule S."/>
            <person name="Murphy L.D."/>
            <person name="Oliver S."/>
            <person name="Osborne J."/>
            <person name="Quail M.A."/>
            <person name="Rajandream M.A."/>
            <person name="Rogers J."/>
            <person name="Rutter S."/>
            <person name="Seeger K."/>
            <person name="Skelton S."/>
            <person name="Squares S."/>
            <person name="Squares R."/>
            <person name="Sulston J.E."/>
            <person name="Taylor K."/>
            <person name="Whitehead S."/>
            <person name="Barrell B.G."/>
        </authorList>
    </citation>
    <scope>NUCLEOTIDE SEQUENCE [LARGE SCALE GENOMIC DNA]</scope>
    <source>
        <strain>ATCC 25618 / H37Rv</strain>
    </source>
</reference>
<reference key="2">
    <citation type="journal article" date="2011" name="Mol. Cell. Proteomics">
        <title>Proteogenomic analysis of Mycobacterium tuberculosis by high resolution mass spectrometry.</title>
        <authorList>
            <person name="Kelkar D.S."/>
            <person name="Kumar D."/>
            <person name="Kumar P."/>
            <person name="Balakrishnan L."/>
            <person name="Muthusamy B."/>
            <person name="Yadav A.K."/>
            <person name="Shrivastava P."/>
            <person name="Marimuthu A."/>
            <person name="Anand S."/>
            <person name="Sundaram H."/>
            <person name="Kingsbury R."/>
            <person name="Harsha H.C."/>
            <person name="Nair B."/>
            <person name="Prasad T.S."/>
            <person name="Chauhan D.S."/>
            <person name="Katoch K."/>
            <person name="Katoch V.M."/>
            <person name="Kumar P."/>
            <person name="Chaerkady R."/>
            <person name="Ramachandran S."/>
            <person name="Dash D."/>
            <person name="Pandey A."/>
        </authorList>
    </citation>
    <scope>IDENTIFICATION BY MASS SPECTROMETRY [LARGE SCALE ANALYSIS]</scope>
    <source>
        <strain>ATCC 25618 / H37Rv</strain>
    </source>
</reference>
<reference key="3">
    <citation type="journal article" date="2020" name="Biochemistry">
        <title>IpdE1-IpdE2 is a heterotetrameric acyl coenzyme A dehydrogenase that is widely distributed in steroid-degrading bacteria.</title>
        <authorList>
            <person name="Gadbery J.E."/>
            <person name="Round J.W."/>
            <person name="Yuan T."/>
            <person name="Wipperman M.F."/>
            <person name="Story K.T."/>
            <person name="Crowe A.M."/>
            <person name="Casabon I."/>
            <person name="Liu J."/>
            <person name="Yang X."/>
            <person name="Eltis L.D."/>
            <person name="Sampson N.S."/>
        </authorList>
    </citation>
    <scope>FUNCTION</scope>
    <scope>CATALYTIC ACTIVITY</scope>
    <scope>COFACTOR</scope>
    <scope>PATHWAY</scope>
    <scope>SUBUNIT</scope>
    <source>
        <strain>H37Rv</strain>
    </source>
</reference>
<proteinExistence type="evidence at protein level"/>
<comment type="function">
    <text evidence="2">Involved in cholesterol degradation. Catalyzes the dehydrogenation of 5OH-HIP-CoA to 5OH-HIPE-CoA (PubMed:32101684). Can also use octanoyl-CoA and dihydroferuloyl-CoA, with lower efficiency. Cannot use 3-oxo-4-pregnene-20-carboxyl-CoA (3-OPC-CoA) (PubMed:32101684).</text>
</comment>
<comment type="catalytic activity">
    <reaction evidence="2">
        <text>3-[(3aS,4S,5R,7aS)-5-hydroxy-7a-methyl-1-oxo-octahydro-1H-inden-4-yl]propanoyl-CoA + A = (2E)-3-[(3aS,4S,5R,7aS)-5-hydroxy-7a-methyl-1-oxo-octahydro-1H-inden-4-yl]prop-2-enoyl-CoA + AH2</text>
        <dbReference type="Rhea" id="RHEA:66348"/>
        <dbReference type="ChEBI" id="CHEBI:13193"/>
        <dbReference type="ChEBI" id="CHEBI:17499"/>
        <dbReference type="ChEBI" id="CHEBI:83738"/>
        <dbReference type="ChEBI" id="CHEBI:167059"/>
    </reaction>
    <physiologicalReaction direction="left-to-right" evidence="2">
        <dbReference type="Rhea" id="RHEA:66349"/>
    </physiologicalReaction>
</comment>
<comment type="cofactor">
    <cofactor evidence="2">
        <name>FAD</name>
        <dbReference type="ChEBI" id="CHEBI:57692"/>
    </cofactor>
    <text evidence="2">Binds 2 FAD per heterotetramer.</text>
</comment>
<comment type="pathway">
    <text evidence="2">Steroid metabolism; cholesterol degradation.</text>
</comment>
<comment type="subunit">
    <text evidence="2">Heterotetramer composed of 2 IpdE1 subunits and 2 IpdE2 subunits.</text>
</comment>
<comment type="similarity">
    <text evidence="4">Belongs to the acyl-CoA dehydrogenase family.</text>
</comment>
<name>IPDE1_MYCTU</name>
<gene>
    <name evidence="3" type="primary">ipdE1</name>
    <name evidence="5" type="synonym">fadE30</name>
    <name evidence="5" type="ordered locus">Rv3560c</name>
</gene>
<protein>
    <recommendedName>
        <fullName evidence="4">Acyl-CoA dehydrogenase IpdE1</fullName>
        <ecNumber evidence="2">1.3.99.-</ecNumber>
    </recommendedName>
    <alternativeName>
        <fullName evidence="4">5OH-HIP-CoA dehydrogenase alpha subunit</fullName>
    </alternativeName>
</protein>
<dbReference type="EC" id="1.3.99.-" evidence="2"/>
<dbReference type="EMBL" id="AL123456">
    <property type="protein sequence ID" value="CCP46382.1"/>
    <property type="molecule type" value="Genomic_DNA"/>
</dbReference>
<dbReference type="RefSeq" id="NP_218077.1">
    <property type="nucleotide sequence ID" value="NC_000962.3"/>
</dbReference>
<dbReference type="RefSeq" id="WP_003419340.1">
    <property type="nucleotide sequence ID" value="NZ_NVQJ01000014.1"/>
</dbReference>
<dbReference type="SMR" id="I6Y3V5"/>
<dbReference type="FunCoup" id="I6Y3V5">
    <property type="interactions" value="5"/>
</dbReference>
<dbReference type="STRING" id="83332.Rv3560c"/>
<dbReference type="PaxDb" id="83332-Rv3560c"/>
<dbReference type="GeneID" id="887838"/>
<dbReference type="KEGG" id="mtu:Rv3560c"/>
<dbReference type="KEGG" id="mtv:RVBD_3560c"/>
<dbReference type="PATRIC" id="fig|83332.111.peg.3965"/>
<dbReference type="TubercuList" id="Rv3560c"/>
<dbReference type="eggNOG" id="COG1960">
    <property type="taxonomic scope" value="Bacteria"/>
</dbReference>
<dbReference type="InParanoid" id="I6Y3V5"/>
<dbReference type="OrthoDB" id="2431337at2"/>
<dbReference type="PhylomeDB" id="I6Y3V5"/>
<dbReference type="BioCyc" id="MetaCyc:G185E-7837-MONOMER"/>
<dbReference type="UniPathway" id="UPA01058"/>
<dbReference type="Proteomes" id="UP000001584">
    <property type="component" value="Chromosome"/>
</dbReference>
<dbReference type="GO" id="GO:0050660">
    <property type="term" value="F:flavin adenine dinucleotide binding"/>
    <property type="evidence" value="ECO:0007669"/>
    <property type="project" value="InterPro"/>
</dbReference>
<dbReference type="GO" id="GO:0016627">
    <property type="term" value="F:oxidoreductase activity, acting on the CH-CH group of donors"/>
    <property type="evidence" value="ECO:0007669"/>
    <property type="project" value="InterPro"/>
</dbReference>
<dbReference type="GO" id="GO:0006707">
    <property type="term" value="P:cholesterol catabolic process"/>
    <property type="evidence" value="ECO:0007669"/>
    <property type="project" value="UniProtKB-UniPathway"/>
</dbReference>
<dbReference type="FunFam" id="2.40.110.10:FF:000011">
    <property type="entry name" value="Acyl-CoA dehydrogenase FadE34"/>
    <property type="match status" value="1"/>
</dbReference>
<dbReference type="Gene3D" id="1.10.540.10">
    <property type="entry name" value="Acyl-CoA dehydrogenase/oxidase, N-terminal domain"/>
    <property type="match status" value="1"/>
</dbReference>
<dbReference type="Gene3D" id="2.40.110.10">
    <property type="entry name" value="Butyryl-CoA Dehydrogenase, subunit A, domain 2"/>
    <property type="match status" value="1"/>
</dbReference>
<dbReference type="Gene3D" id="1.20.140.10">
    <property type="entry name" value="Butyryl-CoA Dehydrogenase, subunit A, domain 3"/>
    <property type="match status" value="1"/>
</dbReference>
<dbReference type="InterPro" id="IPR006091">
    <property type="entry name" value="Acyl-CoA_Oxase/DH_mid-dom"/>
</dbReference>
<dbReference type="InterPro" id="IPR046373">
    <property type="entry name" value="Acyl-CoA_Oxase/DH_mid-dom_sf"/>
</dbReference>
<dbReference type="InterPro" id="IPR036250">
    <property type="entry name" value="AcylCo_DH-like_C"/>
</dbReference>
<dbReference type="InterPro" id="IPR009075">
    <property type="entry name" value="AcylCo_DH/oxidase_C"/>
</dbReference>
<dbReference type="InterPro" id="IPR013786">
    <property type="entry name" value="AcylCoA_DH/ox_N"/>
</dbReference>
<dbReference type="InterPro" id="IPR037069">
    <property type="entry name" value="AcylCoA_DH/ox_N_sf"/>
</dbReference>
<dbReference type="InterPro" id="IPR009100">
    <property type="entry name" value="AcylCoA_DH/oxidase_NM_dom_sf"/>
</dbReference>
<dbReference type="InterPro" id="IPR052161">
    <property type="entry name" value="Mycobact_Acyl-CoA_DH"/>
</dbReference>
<dbReference type="PANTHER" id="PTHR43292">
    <property type="entry name" value="ACYL-COA DEHYDROGENASE"/>
    <property type="match status" value="1"/>
</dbReference>
<dbReference type="PANTHER" id="PTHR43292:SF3">
    <property type="entry name" value="ACYL-COA DEHYDROGENASE FADE29"/>
    <property type="match status" value="1"/>
</dbReference>
<dbReference type="Pfam" id="PF00441">
    <property type="entry name" value="Acyl-CoA_dh_1"/>
    <property type="match status" value="1"/>
</dbReference>
<dbReference type="Pfam" id="PF02770">
    <property type="entry name" value="Acyl-CoA_dh_M"/>
    <property type="match status" value="1"/>
</dbReference>
<dbReference type="Pfam" id="PF02771">
    <property type="entry name" value="Acyl-CoA_dh_N"/>
    <property type="match status" value="1"/>
</dbReference>
<dbReference type="SUPFAM" id="SSF47203">
    <property type="entry name" value="Acyl-CoA dehydrogenase C-terminal domain-like"/>
    <property type="match status" value="1"/>
</dbReference>
<dbReference type="SUPFAM" id="SSF56645">
    <property type="entry name" value="Acyl-CoA dehydrogenase NM domain-like"/>
    <property type="match status" value="1"/>
</dbReference>
<evidence type="ECO:0000250" key="1">
    <source>
        <dbReference type="UniProtKB" id="I6YCA3"/>
    </source>
</evidence>
<evidence type="ECO:0000269" key="2">
    <source>
    </source>
</evidence>
<evidence type="ECO:0000303" key="3">
    <source>
    </source>
</evidence>
<evidence type="ECO:0000305" key="4"/>
<evidence type="ECO:0000312" key="5">
    <source>
        <dbReference type="EMBL" id="CCP46382.1"/>
    </source>
</evidence>
<accession>I6Y3V5</accession>
<keyword id="KW-0153">Cholesterol metabolism</keyword>
<keyword id="KW-0274">FAD</keyword>
<keyword id="KW-0285">Flavoprotein</keyword>
<keyword id="KW-0443">Lipid metabolism</keyword>
<keyword id="KW-0560">Oxidoreductase</keyword>
<keyword id="KW-1185">Reference proteome</keyword>
<keyword id="KW-0753">Steroid metabolism</keyword>
<keyword id="KW-1207">Sterol metabolism</keyword>